<sequence length="663" mass="73492">MSLFVAVENIEKSFPLSGGNEYLALKGIDLEIKQGEFISLIGHSGCGKSTLLNLIAGLELPTDGAVSLEGQQITAPGPDRMVVFQNYSLFPWLTVRENIALAVDEVLRDLPKEERQAIVEEHIQLVGLGHAADKPPAQLSGGMKQRVAIARGLATRPKLLLLDEPFGALDALTRGNLQEKLMQICEENHVTAVMVTHDVDEAVLLSDRIVMLTNGPGSKIGGILEVDIPRPRKRMDVVHHPSYYSLRSEIIYFLNQQKRVKKLNARKVTTVARHGLEKVNLEIGYVPLMACAPLVVAQEKAFFAKHGLDEVSLVRETSWRGIVDGLTENYLDAAQMPAGMPVWMSVGGQGGSPLPIVSSLTMSRNGNGITLSKALYDEGIQTVDDFRNLLRSTADKQHIMGIVHPASMHNLLLRYWLAANQIDPDRDVQLRTIPPAQMVADLKDGTIDGYCIGEPWNAWAAQKEIGFTIASDLEIWNGHPGKVLGVREDWANRYPNSHVALVKALLEACQYCEDPANWDELRELLSDRRYLSCPKEYIQFSQSTADDLAVPHHRFAGAGVNRPSRTEHLWMMTQLARWGDVPFPRNWVEILERVCRVGVFSTAARELGLSEVVNYQRSTPVELFDGVPFNAEDPIAYLNSLPIHRDFSVAEIALDQPRPIAAA</sequence>
<proteinExistence type="inferred from homology"/>
<keyword id="KW-0067">ATP-binding</keyword>
<keyword id="KW-0997">Cell inner membrane</keyword>
<keyword id="KW-1003">Cell membrane</keyword>
<keyword id="KW-0406">Ion transport</keyword>
<keyword id="KW-0472">Membrane</keyword>
<keyword id="KW-0547">Nucleotide-binding</keyword>
<keyword id="KW-1278">Translocase</keyword>
<keyword id="KW-0813">Transport</keyword>
<name>CMPC_SYNP6</name>
<accession>Q5MZ54</accession>
<comment type="function">
    <text evidence="1">Part of the ABC transporter complex CmpABCD involved in bicarbonate transport. Responsible for energy coupling to the transport system (By similarity).</text>
</comment>
<comment type="subunit">
    <text evidence="1">The complex is composed of two ATP-binding proteins (CmpC and CmpD), a transmembrane protein (CmpB) and a solute-binding protein (CmpA).</text>
</comment>
<comment type="subcellular location">
    <subcellularLocation>
        <location evidence="3">Cell inner membrane</location>
        <topology evidence="3">Peripheral membrane protein</topology>
    </subcellularLocation>
</comment>
<comment type="induction">
    <text evidence="1">By carbon dioxide-limited conditions, probably via CmpR.</text>
</comment>
<comment type="similarity">
    <text evidence="3">Belongs to the ABC transporter superfamily. Nitrate/nitrite/cyanate uptake transporter (NitT) (TC 3.A.1.16) family.</text>
</comment>
<feature type="chain" id="PRO_0000341955" description="Bicarbonate transport ATP-binding protein CmpC">
    <location>
        <begin position="1"/>
        <end position="663"/>
    </location>
</feature>
<feature type="domain" description="ABC transporter" evidence="2">
    <location>
        <begin position="5"/>
        <end position="239"/>
    </location>
</feature>
<feature type="region of interest" description="CmpA-like">
    <location>
        <begin position="281"/>
        <end position="663"/>
    </location>
</feature>
<feature type="binding site" evidence="2">
    <location>
        <begin position="42"/>
        <end position="49"/>
    </location>
    <ligand>
        <name>ATP</name>
        <dbReference type="ChEBI" id="CHEBI:30616"/>
    </ligand>
</feature>
<gene>
    <name type="primary">cmpC</name>
    <name type="ordered locus">syc2476_d</name>
</gene>
<protein>
    <recommendedName>
        <fullName>Bicarbonate transport ATP-binding protein CmpC</fullName>
        <ecNumber>7.6.2.-</ecNumber>
    </recommendedName>
</protein>
<reference key="1">
    <citation type="journal article" date="2007" name="Photosyn. Res.">
        <title>Complete nucleotide sequence of the freshwater unicellular cyanobacterium Synechococcus elongatus PCC 6301 chromosome: gene content and organization.</title>
        <authorList>
            <person name="Sugita C."/>
            <person name="Ogata K."/>
            <person name="Shikata M."/>
            <person name="Jikuya H."/>
            <person name="Takano J."/>
            <person name="Furumichi M."/>
            <person name="Kanehisa M."/>
            <person name="Omata T."/>
            <person name="Sugiura M."/>
            <person name="Sugita M."/>
        </authorList>
    </citation>
    <scope>NUCLEOTIDE SEQUENCE [LARGE SCALE GENOMIC DNA]</scope>
    <source>
        <strain>ATCC 27144 / PCC 6301 / SAUG 1402/1</strain>
    </source>
</reference>
<dbReference type="EC" id="7.6.2.-"/>
<dbReference type="EMBL" id="AP008231">
    <property type="protein sequence ID" value="BAD80666.1"/>
    <property type="molecule type" value="Genomic_DNA"/>
</dbReference>
<dbReference type="RefSeq" id="WP_011244786.1">
    <property type="nucleotide sequence ID" value="NZ_CP085785.1"/>
</dbReference>
<dbReference type="SMR" id="Q5MZ54"/>
<dbReference type="KEGG" id="syc:syc2476_d"/>
<dbReference type="eggNOG" id="COG0715">
    <property type="taxonomic scope" value="Bacteria"/>
</dbReference>
<dbReference type="eggNOG" id="COG1116">
    <property type="taxonomic scope" value="Bacteria"/>
</dbReference>
<dbReference type="Proteomes" id="UP000001175">
    <property type="component" value="Chromosome"/>
</dbReference>
<dbReference type="GO" id="GO:0005886">
    <property type="term" value="C:plasma membrane"/>
    <property type="evidence" value="ECO:0007669"/>
    <property type="project" value="UniProtKB-SubCell"/>
</dbReference>
<dbReference type="GO" id="GO:0005524">
    <property type="term" value="F:ATP binding"/>
    <property type="evidence" value="ECO:0007669"/>
    <property type="project" value="UniProtKB-KW"/>
</dbReference>
<dbReference type="GO" id="GO:0016887">
    <property type="term" value="F:ATP hydrolysis activity"/>
    <property type="evidence" value="ECO:0007669"/>
    <property type="project" value="InterPro"/>
</dbReference>
<dbReference type="GO" id="GO:0015112">
    <property type="term" value="F:nitrate transmembrane transporter activity"/>
    <property type="evidence" value="ECO:0007669"/>
    <property type="project" value="InterPro"/>
</dbReference>
<dbReference type="GO" id="GO:0006811">
    <property type="term" value="P:monoatomic ion transport"/>
    <property type="evidence" value="ECO:0007669"/>
    <property type="project" value="UniProtKB-KW"/>
</dbReference>
<dbReference type="CDD" id="cd03293">
    <property type="entry name" value="ABC_NrtD_SsuB_transporters"/>
    <property type="match status" value="1"/>
</dbReference>
<dbReference type="CDD" id="cd13553">
    <property type="entry name" value="PBP2_NrtA_CpmA_like"/>
    <property type="match status" value="1"/>
</dbReference>
<dbReference type="Gene3D" id="3.40.50.300">
    <property type="entry name" value="P-loop containing nucleotide triphosphate hydrolases"/>
    <property type="match status" value="1"/>
</dbReference>
<dbReference type="Gene3D" id="3.40.190.10">
    <property type="entry name" value="Periplasmic binding protein-like II"/>
    <property type="match status" value="2"/>
</dbReference>
<dbReference type="InterPro" id="IPR003593">
    <property type="entry name" value="AAA+_ATPase"/>
</dbReference>
<dbReference type="InterPro" id="IPR050093">
    <property type="entry name" value="ABC_SmlMolc_Importer"/>
</dbReference>
<dbReference type="InterPro" id="IPR003439">
    <property type="entry name" value="ABC_transporter-like_ATP-bd"/>
</dbReference>
<dbReference type="InterPro" id="IPR017871">
    <property type="entry name" value="ABC_transporter-like_CS"/>
</dbReference>
<dbReference type="InterPro" id="IPR005890">
    <property type="entry name" value="NO3_transporter_ATP-bd-like"/>
</dbReference>
<dbReference type="InterPro" id="IPR044527">
    <property type="entry name" value="NrtA/CpmA_ABC-bd_dom"/>
</dbReference>
<dbReference type="InterPro" id="IPR027417">
    <property type="entry name" value="P-loop_NTPase"/>
</dbReference>
<dbReference type="NCBIfam" id="TIGR01184">
    <property type="entry name" value="ntrCD"/>
    <property type="match status" value="1"/>
</dbReference>
<dbReference type="PANTHER" id="PTHR42781:SF8">
    <property type="entry name" value="BICARBONATE TRANSPORT ATP-BINDING PROTEIN CMPC"/>
    <property type="match status" value="1"/>
</dbReference>
<dbReference type="PANTHER" id="PTHR42781">
    <property type="entry name" value="SPERMIDINE/PUTRESCINE IMPORT ATP-BINDING PROTEIN POTA"/>
    <property type="match status" value="1"/>
</dbReference>
<dbReference type="Pfam" id="PF00005">
    <property type="entry name" value="ABC_tran"/>
    <property type="match status" value="1"/>
</dbReference>
<dbReference type="Pfam" id="PF13379">
    <property type="entry name" value="NMT1_2"/>
    <property type="match status" value="1"/>
</dbReference>
<dbReference type="SMART" id="SM00382">
    <property type="entry name" value="AAA"/>
    <property type="match status" value="1"/>
</dbReference>
<dbReference type="SUPFAM" id="SSF52540">
    <property type="entry name" value="P-loop containing nucleoside triphosphate hydrolases"/>
    <property type="match status" value="1"/>
</dbReference>
<dbReference type="SUPFAM" id="SSF53850">
    <property type="entry name" value="Periplasmic binding protein-like II"/>
    <property type="match status" value="1"/>
</dbReference>
<dbReference type="PROSITE" id="PS00211">
    <property type="entry name" value="ABC_TRANSPORTER_1"/>
    <property type="match status" value="1"/>
</dbReference>
<dbReference type="PROSITE" id="PS50893">
    <property type="entry name" value="ABC_TRANSPORTER_2"/>
    <property type="match status" value="1"/>
</dbReference>
<evidence type="ECO:0000250" key="1"/>
<evidence type="ECO:0000255" key="2">
    <source>
        <dbReference type="PROSITE-ProRule" id="PRU00434"/>
    </source>
</evidence>
<evidence type="ECO:0000305" key="3"/>
<organism>
    <name type="scientific">Synechococcus sp. (strain ATCC 27144 / PCC 6301 / SAUG 1402/1)</name>
    <name type="common">Anacystis nidulans</name>
    <dbReference type="NCBI Taxonomy" id="269084"/>
    <lineage>
        <taxon>Bacteria</taxon>
        <taxon>Bacillati</taxon>
        <taxon>Cyanobacteriota</taxon>
        <taxon>Cyanophyceae</taxon>
        <taxon>Synechococcales</taxon>
        <taxon>Synechococcaceae</taxon>
        <taxon>Synechococcus</taxon>
    </lineage>
</organism>